<comment type="function">
    <text evidence="1">Involved in mRNA degradation. Catalyzes the phosphorolysis of single-stranded polyribonucleotides processively in the 3'- to 5'-direction.</text>
</comment>
<comment type="catalytic activity">
    <reaction evidence="1">
        <text>RNA(n+1) + phosphate = RNA(n) + a ribonucleoside 5'-diphosphate</text>
        <dbReference type="Rhea" id="RHEA:22096"/>
        <dbReference type="Rhea" id="RHEA-COMP:14527"/>
        <dbReference type="Rhea" id="RHEA-COMP:17342"/>
        <dbReference type="ChEBI" id="CHEBI:43474"/>
        <dbReference type="ChEBI" id="CHEBI:57930"/>
        <dbReference type="ChEBI" id="CHEBI:140395"/>
        <dbReference type="EC" id="2.7.7.8"/>
    </reaction>
</comment>
<comment type="cofactor">
    <cofactor evidence="1">
        <name>Mg(2+)</name>
        <dbReference type="ChEBI" id="CHEBI:18420"/>
    </cofactor>
</comment>
<comment type="subcellular location">
    <subcellularLocation>
        <location evidence="1">Cytoplasm</location>
    </subcellularLocation>
</comment>
<comment type="similarity">
    <text evidence="1">Belongs to the polyribonucleotide nucleotidyltransferase family.</text>
</comment>
<gene>
    <name evidence="1" type="primary">pnp</name>
    <name type="ordered locus">RL0120</name>
</gene>
<reference key="1">
    <citation type="journal article" date="2006" name="Genome Biol.">
        <title>The genome of Rhizobium leguminosarum has recognizable core and accessory components.</title>
        <authorList>
            <person name="Young J.P.W."/>
            <person name="Crossman L.C."/>
            <person name="Johnston A.W.B."/>
            <person name="Thomson N.R."/>
            <person name="Ghazoui Z.F."/>
            <person name="Hull K.H."/>
            <person name="Wexler M."/>
            <person name="Curson A.R.J."/>
            <person name="Todd J.D."/>
            <person name="Poole P.S."/>
            <person name="Mauchline T.H."/>
            <person name="East A.K."/>
            <person name="Quail M.A."/>
            <person name="Churcher C."/>
            <person name="Arrowsmith C."/>
            <person name="Cherevach I."/>
            <person name="Chillingworth T."/>
            <person name="Clarke K."/>
            <person name="Cronin A."/>
            <person name="Davis P."/>
            <person name="Fraser A."/>
            <person name="Hance Z."/>
            <person name="Hauser H."/>
            <person name="Jagels K."/>
            <person name="Moule S."/>
            <person name="Mungall K."/>
            <person name="Norbertczak H."/>
            <person name="Rabbinowitsch E."/>
            <person name="Sanders M."/>
            <person name="Simmonds M."/>
            <person name="Whitehead S."/>
            <person name="Parkhill J."/>
        </authorList>
    </citation>
    <scope>NUCLEOTIDE SEQUENCE [LARGE SCALE GENOMIC DNA]</scope>
    <source>
        <strain>DSM 114642 / LMG 32736 / 3841</strain>
    </source>
</reference>
<name>PNP_RHIJ3</name>
<evidence type="ECO:0000255" key="1">
    <source>
        <dbReference type="HAMAP-Rule" id="MF_01595"/>
    </source>
</evidence>
<organism>
    <name type="scientific">Rhizobium johnstonii (strain DSM 114642 / LMG 32736 / 3841)</name>
    <name type="common">Rhizobium leguminosarum bv. viciae</name>
    <dbReference type="NCBI Taxonomy" id="216596"/>
    <lineage>
        <taxon>Bacteria</taxon>
        <taxon>Pseudomonadati</taxon>
        <taxon>Pseudomonadota</taxon>
        <taxon>Alphaproteobacteria</taxon>
        <taxon>Hyphomicrobiales</taxon>
        <taxon>Rhizobiaceae</taxon>
        <taxon>Rhizobium/Agrobacterium group</taxon>
        <taxon>Rhizobium</taxon>
        <taxon>Rhizobium johnstonii</taxon>
    </lineage>
</organism>
<accession>Q1MN44</accession>
<dbReference type="EC" id="2.7.7.8" evidence="1"/>
<dbReference type="EMBL" id="AM236080">
    <property type="protein sequence ID" value="CAK05608.1"/>
    <property type="molecule type" value="Genomic_DNA"/>
</dbReference>
<dbReference type="RefSeq" id="WP_011649943.1">
    <property type="nucleotide sequence ID" value="NC_008380.1"/>
</dbReference>
<dbReference type="SMR" id="Q1MN44"/>
<dbReference type="EnsemblBacteria" id="CAK05608">
    <property type="protein sequence ID" value="CAK05608"/>
    <property type="gene ID" value="RL0120"/>
</dbReference>
<dbReference type="KEGG" id="rle:RL0120"/>
<dbReference type="eggNOG" id="COG1185">
    <property type="taxonomic scope" value="Bacteria"/>
</dbReference>
<dbReference type="HOGENOM" id="CLU_004217_2_2_5"/>
<dbReference type="Proteomes" id="UP000006575">
    <property type="component" value="Chromosome"/>
</dbReference>
<dbReference type="GO" id="GO:0005829">
    <property type="term" value="C:cytosol"/>
    <property type="evidence" value="ECO:0007669"/>
    <property type="project" value="TreeGrafter"/>
</dbReference>
<dbReference type="GO" id="GO:0000175">
    <property type="term" value="F:3'-5'-RNA exonuclease activity"/>
    <property type="evidence" value="ECO:0007669"/>
    <property type="project" value="TreeGrafter"/>
</dbReference>
<dbReference type="GO" id="GO:0000287">
    <property type="term" value="F:magnesium ion binding"/>
    <property type="evidence" value="ECO:0007669"/>
    <property type="project" value="UniProtKB-UniRule"/>
</dbReference>
<dbReference type="GO" id="GO:0004654">
    <property type="term" value="F:polyribonucleotide nucleotidyltransferase activity"/>
    <property type="evidence" value="ECO:0007669"/>
    <property type="project" value="UniProtKB-UniRule"/>
</dbReference>
<dbReference type="GO" id="GO:0003723">
    <property type="term" value="F:RNA binding"/>
    <property type="evidence" value="ECO:0007669"/>
    <property type="project" value="UniProtKB-UniRule"/>
</dbReference>
<dbReference type="GO" id="GO:0006402">
    <property type="term" value="P:mRNA catabolic process"/>
    <property type="evidence" value="ECO:0007669"/>
    <property type="project" value="UniProtKB-UniRule"/>
</dbReference>
<dbReference type="GO" id="GO:0006396">
    <property type="term" value="P:RNA processing"/>
    <property type="evidence" value="ECO:0007669"/>
    <property type="project" value="InterPro"/>
</dbReference>
<dbReference type="CDD" id="cd02393">
    <property type="entry name" value="KH-I_PNPase"/>
    <property type="match status" value="1"/>
</dbReference>
<dbReference type="CDD" id="cd11363">
    <property type="entry name" value="RNase_PH_PNPase_1"/>
    <property type="match status" value="1"/>
</dbReference>
<dbReference type="CDD" id="cd11364">
    <property type="entry name" value="RNase_PH_PNPase_2"/>
    <property type="match status" value="1"/>
</dbReference>
<dbReference type="CDD" id="cd04472">
    <property type="entry name" value="S1_PNPase"/>
    <property type="match status" value="1"/>
</dbReference>
<dbReference type="FunFam" id="2.40.50.140:FF:000107">
    <property type="entry name" value="Polyribonucleotide nucleotidyltransferase"/>
    <property type="match status" value="1"/>
</dbReference>
<dbReference type="FunFam" id="3.30.1370.10:FF:000001">
    <property type="entry name" value="Polyribonucleotide nucleotidyltransferase"/>
    <property type="match status" value="1"/>
</dbReference>
<dbReference type="FunFam" id="3.30.230.70:FF:000001">
    <property type="entry name" value="Polyribonucleotide nucleotidyltransferase"/>
    <property type="match status" value="1"/>
</dbReference>
<dbReference type="FunFam" id="3.30.230.70:FF:000002">
    <property type="entry name" value="Polyribonucleotide nucleotidyltransferase"/>
    <property type="match status" value="1"/>
</dbReference>
<dbReference type="Gene3D" id="3.30.230.70">
    <property type="entry name" value="GHMP Kinase, N-terminal domain"/>
    <property type="match status" value="2"/>
</dbReference>
<dbReference type="Gene3D" id="3.30.1370.10">
    <property type="entry name" value="K Homology domain, type 1"/>
    <property type="match status" value="1"/>
</dbReference>
<dbReference type="Gene3D" id="2.40.50.140">
    <property type="entry name" value="Nucleic acid-binding proteins"/>
    <property type="match status" value="1"/>
</dbReference>
<dbReference type="HAMAP" id="MF_01595">
    <property type="entry name" value="PNPase"/>
    <property type="match status" value="1"/>
</dbReference>
<dbReference type="InterPro" id="IPR001247">
    <property type="entry name" value="ExoRNase_PH_dom1"/>
</dbReference>
<dbReference type="InterPro" id="IPR015847">
    <property type="entry name" value="ExoRNase_PH_dom2"/>
</dbReference>
<dbReference type="InterPro" id="IPR036345">
    <property type="entry name" value="ExoRNase_PH_dom2_sf"/>
</dbReference>
<dbReference type="InterPro" id="IPR004087">
    <property type="entry name" value="KH_dom"/>
</dbReference>
<dbReference type="InterPro" id="IPR004088">
    <property type="entry name" value="KH_dom_type_1"/>
</dbReference>
<dbReference type="InterPro" id="IPR036612">
    <property type="entry name" value="KH_dom_type_1_sf"/>
</dbReference>
<dbReference type="InterPro" id="IPR012340">
    <property type="entry name" value="NA-bd_OB-fold"/>
</dbReference>
<dbReference type="InterPro" id="IPR012162">
    <property type="entry name" value="PNPase"/>
</dbReference>
<dbReference type="InterPro" id="IPR027408">
    <property type="entry name" value="PNPase/RNase_PH_dom_sf"/>
</dbReference>
<dbReference type="InterPro" id="IPR015848">
    <property type="entry name" value="PNPase_PH_RNA-bd_bac/org-type"/>
</dbReference>
<dbReference type="InterPro" id="IPR036456">
    <property type="entry name" value="PNPase_PH_RNA-bd_sf"/>
</dbReference>
<dbReference type="InterPro" id="IPR020568">
    <property type="entry name" value="Ribosomal_Su5_D2-typ_SF"/>
</dbReference>
<dbReference type="InterPro" id="IPR003029">
    <property type="entry name" value="S1_domain"/>
</dbReference>
<dbReference type="NCBIfam" id="TIGR03591">
    <property type="entry name" value="polynuc_phos"/>
    <property type="match status" value="1"/>
</dbReference>
<dbReference type="NCBIfam" id="NF008805">
    <property type="entry name" value="PRK11824.1"/>
    <property type="match status" value="1"/>
</dbReference>
<dbReference type="PANTHER" id="PTHR11252">
    <property type="entry name" value="POLYRIBONUCLEOTIDE NUCLEOTIDYLTRANSFERASE"/>
    <property type="match status" value="1"/>
</dbReference>
<dbReference type="PANTHER" id="PTHR11252:SF0">
    <property type="entry name" value="POLYRIBONUCLEOTIDE NUCLEOTIDYLTRANSFERASE 1, MITOCHONDRIAL"/>
    <property type="match status" value="1"/>
</dbReference>
<dbReference type="Pfam" id="PF00013">
    <property type="entry name" value="KH_1"/>
    <property type="match status" value="1"/>
</dbReference>
<dbReference type="Pfam" id="PF03726">
    <property type="entry name" value="PNPase"/>
    <property type="match status" value="1"/>
</dbReference>
<dbReference type="Pfam" id="PF01138">
    <property type="entry name" value="RNase_PH"/>
    <property type="match status" value="2"/>
</dbReference>
<dbReference type="Pfam" id="PF03725">
    <property type="entry name" value="RNase_PH_C"/>
    <property type="match status" value="2"/>
</dbReference>
<dbReference type="Pfam" id="PF00575">
    <property type="entry name" value="S1"/>
    <property type="match status" value="1"/>
</dbReference>
<dbReference type="PIRSF" id="PIRSF005499">
    <property type="entry name" value="PNPase"/>
    <property type="match status" value="1"/>
</dbReference>
<dbReference type="SMART" id="SM00322">
    <property type="entry name" value="KH"/>
    <property type="match status" value="1"/>
</dbReference>
<dbReference type="SMART" id="SM00316">
    <property type="entry name" value="S1"/>
    <property type="match status" value="1"/>
</dbReference>
<dbReference type="SUPFAM" id="SSF54791">
    <property type="entry name" value="Eukaryotic type KH-domain (KH-domain type I)"/>
    <property type="match status" value="1"/>
</dbReference>
<dbReference type="SUPFAM" id="SSF50249">
    <property type="entry name" value="Nucleic acid-binding proteins"/>
    <property type="match status" value="1"/>
</dbReference>
<dbReference type="SUPFAM" id="SSF46915">
    <property type="entry name" value="Polynucleotide phosphorylase/guanosine pentaphosphate synthase (PNPase/GPSI), domain 3"/>
    <property type="match status" value="1"/>
</dbReference>
<dbReference type="SUPFAM" id="SSF55666">
    <property type="entry name" value="Ribonuclease PH domain 2-like"/>
    <property type="match status" value="2"/>
</dbReference>
<dbReference type="SUPFAM" id="SSF54211">
    <property type="entry name" value="Ribosomal protein S5 domain 2-like"/>
    <property type="match status" value="2"/>
</dbReference>
<dbReference type="PROSITE" id="PS50084">
    <property type="entry name" value="KH_TYPE_1"/>
    <property type="match status" value="1"/>
</dbReference>
<dbReference type="PROSITE" id="PS50126">
    <property type="entry name" value="S1"/>
    <property type="match status" value="1"/>
</dbReference>
<keyword id="KW-0963">Cytoplasm</keyword>
<keyword id="KW-0460">Magnesium</keyword>
<keyword id="KW-0479">Metal-binding</keyword>
<keyword id="KW-0548">Nucleotidyltransferase</keyword>
<keyword id="KW-0694">RNA-binding</keyword>
<keyword id="KW-0808">Transferase</keyword>
<sequence>MFDTHTVEIEWAGRPLKLETGKIARQADGAVLATYGETVVLATVVSAKAPKAGQDFFPLTVNYQEKTYAAGKIPGGYFKREGRPSEKETLVSRLIDRPIRPLFPEGYKNDTQVVVTVIQHDLENDPDVLSMVATSAALTLSGVPFMGPVGGARVGYINGEYVLNPHLDEMDESSLDLVVAGTYDAVLMVESEAKELNEDVMLGAVMFGHKGFQPVLDAIIKLAEVAAKEPRDFQPADYSALESEMLGLAEGELRNAYKITQKADRYAAVDAVKAKVKAHFLPEEGEAKYTAEEVGAIFKHLQAKIVRWNILDTKSRIDGRNLETVRPIVSEVGLLPRTHGSALFTRGETQAIVVATLGTGEDEQYVDSLTGMYKERFLLHYNFPPYSVGETGRMGSPGRREIGHGKLAWRAIRPMLPTPEQFPYTLRVVSEITESNGSSSMATVCGTSLALMDAGVPLAKPVAGIAMGLILEGDRFAVLSDILGDEDHLGDMDFKVAGTADGITSLQMDIKITGITEEIMKVALGQAQGGRVHILGEMSKAITESRGQLGEFAPRIEVMNIPVDKIREVIGSGGKVIREIVEKTGAKINIEDDGTVKIASSSGKEIEAARKWIHSIVAEPEIGQVYEGTVVKTADFGAFVNFFGARDGLVHISQLASERVAKTQDVVKEGDKVWVKLLGFDERGKVRLSMKVVDQATGQEIPNEKKKEEAAE</sequence>
<proteinExistence type="inferred from homology"/>
<protein>
    <recommendedName>
        <fullName evidence="1">Polyribonucleotide nucleotidyltransferase</fullName>
        <ecNumber evidence="1">2.7.7.8</ecNumber>
    </recommendedName>
    <alternativeName>
        <fullName evidence="1">Polynucleotide phosphorylase</fullName>
        <shortName evidence="1">PNPase</shortName>
    </alternativeName>
</protein>
<feature type="chain" id="PRO_0000329800" description="Polyribonucleotide nucleotidyltransferase">
    <location>
        <begin position="1"/>
        <end position="712"/>
    </location>
</feature>
<feature type="domain" description="KH" evidence="1">
    <location>
        <begin position="554"/>
        <end position="613"/>
    </location>
</feature>
<feature type="domain" description="S1 motif" evidence="1">
    <location>
        <begin position="623"/>
        <end position="691"/>
    </location>
</feature>
<feature type="binding site" evidence="1">
    <location>
        <position position="487"/>
    </location>
    <ligand>
        <name>Mg(2+)</name>
        <dbReference type="ChEBI" id="CHEBI:18420"/>
    </ligand>
</feature>
<feature type="binding site" evidence="1">
    <location>
        <position position="493"/>
    </location>
    <ligand>
        <name>Mg(2+)</name>
        <dbReference type="ChEBI" id="CHEBI:18420"/>
    </ligand>
</feature>